<comment type="catalytic activity">
    <reaction evidence="1">
        <text>L-histidine = trans-urocanate + NH4(+)</text>
        <dbReference type="Rhea" id="RHEA:21232"/>
        <dbReference type="ChEBI" id="CHEBI:17771"/>
        <dbReference type="ChEBI" id="CHEBI:28938"/>
        <dbReference type="ChEBI" id="CHEBI:57595"/>
        <dbReference type="EC" id="4.3.1.3"/>
    </reaction>
</comment>
<comment type="pathway">
    <text evidence="1">Amino-acid degradation; L-histidine degradation into L-glutamate; N-formimidoyl-L-glutamate from L-histidine: step 1/3.</text>
</comment>
<comment type="subcellular location">
    <subcellularLocation>
        <location evidence="1">Cytoplasm</location>
    </subcellularLocation>
</comment>
<comment type="PTM">
    <text evidence="1">Contains an active site 4-methylidene-imidazol-5-one (MIO), which is formed autocatalytically by cyclization and dehydration of residues Ala-Ser-Gly.</text>
</comment>
<comment type="similarity">
    <text evidence="1">Belongs to the PAL/histidase family.</text>
</comment>
<dbReference type="EC" id="4.3.1.3" evidence="1"/>
<dbReference type="EMBL" id="CP000675">
    <property type="protein sequence ID" value="ABQ54772.1"/>
    <property type="molecule type" value="Genomic_DNA"/>
</dbReference>
<dbReference type="RefSeq" id="WP_011946404.1">
    <property type="nucleotide sequence ID" value="NC_009494.2"/>
</dbReference>
<dbReference type="SMR" id="A5IBM2"/>
<dbReference type="KEGG" id="lpc:LPC_0796"/>
<dbReference type="HOGENOM" id="CLU_014801_4_0_6"/>
<dbReference type="UniPathway" id="UPA00379">
    <property type="reaction ID" value="UER00549"/>
</dbReference>
<dbReference type="GO" id="GO:0005737">
    <property type="term" value="C:cytoplasm"/>
    <property type="evidence" value="ECO:0007669"/>
    <property type="project" value="UniProtKB-SubCell"/>
</dbReference>
<dbReference type="GO" id="GO:0004397">
    <property type="term" value="F:histidine ammonia-lyase activity"/>
    <property type="evidence" value="ECO:0007669"/>
    <property type="project" value="UniProtKB-UniRule"/>
</dbReference>
<dbReference type="GO" id="GO:0019556">
    <property type="term" value="P:L-histidine catabolic process to glutamate and formamide"/>
    <property type="evidence" value="ECO:0007669"/>
    <property type="project" value="UniProtKB-UniPathway"/>
</dbReference>
<dbReference type="GO" id="GO:0019557">
    <property type="term" value="P:L-histidine catabolic process to glutamate and formate"/>
    <property type="evidence" value="ECO:0007669"/>
    <property type="project" value="UniProtKB-UniPathway"/>
</dbReference>
<dbReference type="CDD" id="cd00332">
    <property type="entry name" value="PAL-HAL"/>
    <property type="match status" value="1"/>
</dbReference>
<dbReference type="FunFam" id="1.10.275.10:FF:000005">
    <property type="entry name" value="Histidine ammonia-lyase"/>
    <property type="match status" value="1"/>
</dbReference>
<dbReference type="FunFam" id="1.20.200.10:FF:000003">
    <property type="entry name" value="Histidine ammonia-lyase"/>
    <property type="match status" value="1"/>
</dbReference>
<dbReference type="Gene3D" id="1.20.200.10">
    <property type="entry name" value="Fumarase/aspartase (Central domain)"/>
    <property type="match status" value="1"/>
</dbReference>
<dbReference type="Gene3D" id="1.10.275.10">
    <property type="entry name" value="Fumarase/aspartase (N-terminal domain)"/>
    <property type="match status" value="1"/>
</dbReference>
<dbReference type="HAMAP" id="MF_00229">
    <property type="entry name" value="His_ammonia_lyase"/>
    <property type="match status" value="1"/>
</dbReference>
<dbReference type="InterPro" id="IPR001106">
    <property type="entry name" value="Aromatic_Lyase"/>
</dbReference>
<dbReference type="InterPro" id="IPR024083">
    <property type="entry name" value="Fumarase/histidase_N"/>
</dbReference>
<dbReference type="InterPro" id="IPR005921">
    <property type="entry name" value="HutH"/>
</dbReference>
<dbReference type="InterPro" id="IPR008948">
    <property type="entry name" value="L-Aspartase-like"/>
</dbReference>
<dbReference type="InterPro" id="IPR022313">
    <property type="entry name" value="Phe/His_NH3-lyase_AS"/>
</dbReference>
<dbReference type="NCBIfam" id="TIGR01225">
    <property type="entry name" value="hutH"/>
    <property type="match status" value="1"/>
</dbReference>
<dbReference type="NCBIfam" id="NF006871">
    <property type="entry name" value="PRK09367.1"/>
    <property type="match status" value="1"/>
</dbReference>
<dbReference type="PANTHER" id="PTHR10362">
    <property type="entry name" value="HISTIDINE AMMONIA-LYASE"/>
    <property type="match status" value="1"/>
</dbReference>
<dbReference type="Pfam" id="PF00221">
    <property type="entry name" value="Lyase_aromatic"/>
    <property type="match status" value="1"/>
</dbReference>
<dbReference type="SUPFAM" id="SSF48557">
    <property type="entry name" value="L-aspartase-like"/>
    <property type="match status" value="1"/>
</dbReference>
<dbReference type="PROSITE" id="PS00488">
    <property type="entry name" value="PAL_HISTIDASE"/>
    <property type="match status" value="1"/>
</dbReference>
<gene>
    <name evidence="1" type="primary">hutH</name>
    <name type="ordered locus">LPC_0796</name>
</gene>
<feature type="chain" id="PRO_1000021559" description="Histidine ammonia-lyase">
    <location>
        <begin position="1"/>
        <end position="505"/>
    </location>
</feature>
<feature type="modified residue" description="2,3-didehydroalanine (Ser)" evidence="1">
    <location>
        <position position="145"/>
    </location>
</feature>
<feature type="cross-link" description="5-imidazolinone (Ala-Gly)" evidence="1">
    <location>
        <begin position="144"/>
        <end position="146"/>
    </location>
</feature>
<accession>A5IBM2</accession>
<evidence type="ECO:0000255" key="1">
    <source>
        <dbReference type="HAMAP-Rule" id="MF_00229"/>
    </source>
</evidence>
<organism>
    <name type="scientific">Legionella pneumophila (strain Corby)</name>
    <dbReference type="NCBI Taxonomy" id="400673"/>
    <lineage>
        <taxon>Bacteria</taxon>
        <taxon>Pseudomonadati</taxon>
        <taxon>Pseudomonadota</taxon>
        <taxon>Gammaproteobacteria</taxon>
        <taxon>Legionellales</taxon>
        <taxon>Legionellaceae</taxon>
        <taxon>Legionella</taxon>
    </lineage>
</organism>
<name>HUTH_LEGPC</name>
<keyword id="KW-0963">Cytoplasm</keyword>
<keyword id="KW-0369">Histidine metabolism</keyword>
<keyword id="KW-0456">Lyase</keyword>
<proteinExistence type="inferred from homology"/>
<protein>
    <recommendedName>
        <fullName evidence="1">Histidine ammonia-lyase</fullName>
        <shortName evidence="1">Histidase</shortName>
        <ecNumber evidence="1">4.3.1.3</ecNumber>
    </recommendedName>
</protein>
<sequence>MSEHFILQPGQLSLLSIKQILDEELSCVLAENAFELIRASHQTVKKVIDEKKTVYGINTGFGSLANQTISSDCLKELQRNIVLSHACGTGKLLPDDVVALILLLKINNLSQGYSGVRLELINALIALFNHKVYPCIPSKGSVGASGDLVPLAHLSLPLLGEGEVRHQGQVISAEEGLKLAGLKPLELEAKEGLALLNGLQVSTALALSALFISETLFETAIISGSLSVDAASGSDVPFDDRIHQIRGHQAQISAARMYRNLLAGSQIRESHRYCNRVQDPYSLRCQPQIMGAVLHQMEFVGQTLQVEANAISDNPLVFAEQGDILSGGNFHGEIIAMAADNLALALSEIGGSAERRIALLIDKNFSGLPAFLVRESGLNSGFMIAHVTAASCASDNKALAHPHSVDSLPTSANQEDHVSMATSAARRLHEMIDNTSTILAIELLAACQGLEFHKPLKTSPQLDKIYQSVRSVVKEYDKDRYFAPDIEKIKKKILDKEFSLLTLTN</sequence>
<reference key="1">
    <citation type="submission" date="2006-11" db="EMBL/GenBank/DDBJ databases">
        <title>Identification and characterization of a new conjugation/ type IVA secretion system (trb/tra) of L. pneumophila Corby localized on a mobile genomic island.</title>
        <authorList>
            <person name="Gloeckner G."/>
            <person name="Albert-Weissenberger C."/>
            <person name="Weinmann E."/>
            <person name="Jacobi S."/>
            <person name="Schunder E."/>
            <person name="Steinert M."/>
            <person name="Buchrieser C."/>
            <person name="Hacker J."/>
            <person name="Heuner K."/>
        </authorList>
    </citation>
    <scope>NUCLEOTIDE SEQUENCE [LARGE SCALE GENOMIC DNA]</scope>
    <source>
        <strain>Corby</strain>
    </source>
</reference>